<accession>Q0HR25</accession>
<name>TPMT_SHESR</name>
<protein>
    <recommendedName>
        <fullName evidence="1">Thiopurine S-methyltransferase</fullName>
        <ecNumber evidence="1">2.1.1.67</ecNumber>
    </recommendedName>
    <alternativeName>
        <fullName evidence="1">Thiopurine methyltransferase</fullName>
    </alternativeName>
</protein>
<feature type="chain" id="PRO_1000047225" description="Thiopurine S-methyltransferase">
    <location>
        <begin position="1"/>
        <end position="218"/>
    </location>
</feature>
<feature type="binding site" evidence="1">
    <location>
        <position position="10"/>
    </location>
    <ligand>
        <name>S-adenosyl-L-methionine</name>
        <dbReference type="ChEBI" id="CHEBI:59789"/>
    </ligand>
</feature>
<feature type="binding site" evidence="1">
    <location>
        <position position="45"/>
    </location>
    <ligand>
        <name>S-adenosyl-L-methionine</name>
        <dbReference type="ChEBI" id="CHEBI:59789"/>
    </ligand>
</feature>
<feature type="binding site" evidence="1">
    <location>
        <position position="66"/>
    </location>
    <ligand>
        <name>S-adenosyl-L-methionine</name>
        <dbReference type="ChEBI" id="CHEBI:59789"/>
    </ligand>
</feature>
<feature type="binding site" evidence="1">
    <location>
        <position position="123"/>
    </location>
    <ligand>
        <name>S-adenosyl-L-methionine</name>
        <dbReference type="ChEBI" id="CHEBI:59789"/>
    </ligand>
</feature>
<evidence type="ECO:0000255" key="1">
    <source>
        <dbReference type="HAMAP-Rule" id="MF_00812"/>
    </source>
</evidence>
<gene>
    <name evidence="1" type="primary">tpm</name>
    <name type="ordered locus">Shewmr7_3449</name>
</gene>
<keyword id="KW-0963">Cytoplasm</keyword>
<keyword id="KW-0489">Methyltransferase</keyword>
<keyword id="KW-0949">S-adenosyl-L-methionine</keyword>
<keyword id="KW-0808">Transferase</keyword>
<organism>
    <name type="scientific">Shewanella sp. (strain MR-7)</name>
    <dbReference type="NCBI Taxonomy" id="60481"/>
    <lineage>
        <taxon>Bacteria</taxon>
        <taxon>Pseudomonadati</taxon>
        <taxon>Pseudomonadota</taxon>
        <taxon>Gammaproteobacteria</taxon>
        <taxon>Alteromonadales</taxon>
        <taxon>Shewanellaceae</taxon>
        <taxon>Shewanella</taxon>
    </lineage>
</organism>
<proteinExistence type="inferred from homology"/>
<sequence>MEPGFWHEKWQQQLIGFHQQDINPFLVKYWQTLALPADAKVFVPLCGKSLDMCFLAEQGHQVIGCELNELAVQQFFEENQLPMKKSAEGEHQHYHTEQVSLYQGDIFTLPQSITAKVSGFYDRAALIAWPESMRTQYAKQLAQLLPSGSVGLLVTLDYPQEALSGPPFAVSPTWVETHLSDDFEIQALACQDVLADNPRFVKKEVPWLNEAVYLLRRK</sequence>
<dbReference type="EC" id="2.1.1.67" evidence="1"/>
<dbReference type="EMBL" id="CP000444">
    <property type="protein sequence ID" value="ABI44430.1"/>
    <property type="molecule type" value="Genomic_DNA"/>
</dbReference>
<dbReference type="SMR" id="Q0HR25"/>
<dbReference type="KEGG" id="shm:Shewmr7_3449"/>
<dbReference type="HOGENOM" id="CLU_085515_1_0_6"/>
<dbReference type="GO" id="GO:0005737">
    <property type="term" value="C:cytoplasm"/>
    <property type="evidence" value="ECO:0007669"/>
    <property type="project" value="UniProtKB-SubCell"/>
</dbReference>
<dbReference type="GO" id="GO:0008119">
    <property type="term" value="F:thiopurine S-methyltransferase activity"/>
    <property type="evidence" value="ECO:0007669"/>
    <property type="project" value="UniProtKB-UniRule"/>
</dbReference>
<dbReference type="GO" id="GO:0032259">
    <property type="term" value="P:methylation"/>
    <property type="evidence" value="ECO:0007669"/>
    <property type="project" value="UniProtKB-KW"/>
</dbReference>
<dbReference type="GO" id="GO:0010038">
    <property type="term" value="P:response to metal ion"/>
    <property type="evidence" value="ECO:0007669"/>
    <property type="project" value="InterPro"/>
</dbReference>
<dbReference type="CDD" id="cd02440">
    <property type="entry name" value="AdoMet_MTases"/>
    <property type="match status" value="1"/>
</dbReference>
<dbReference type="FunFam" id="3.40.50.150:FF:000101">
    <property type="entry name" value="Thiopurine S-methyltransferase"/>
    <property type="match status" value="1"/>
</dbReference>
<dbReference type="Gene3D" id="3.40.50.150">
    <property type="entry name" value="Vaccinia Virus protein VP39"/>
    <property type="match status" value="1"/>
</dbReference>
<dbReference type="HAMAP" id="MF_00812">
    <property type="entry name" value="Thiopur_methtran"/>
    <property type="match status" value="1"/>
</dbReference>
<dbReference type="InterPro" id="IPR029063">
    <property type="entry name" value="SAM-dependent_MTases_sf"/>
</dbReference>
<dbReference type="InterPro" id="IPR022474">
    <property type="entry name" value="Thiopur_S-MeTfrase_Se/Te_detox"/>
</dbReference>
<dbReference type="InterPro" id="IPR025835">
    <property type="entry name" value="Thiopurine_S-MeTrfase"/>
</dbReference>
<dbReference type="InterPro" id="IPR008854">
    <property type="entry name" value="TPMT"/>
</dbReference>
<dbReference type="NCBIfam" id="NF009732">
    <property type="entry name" value="PRK13255.1"/>
    <property type="match status" value="1"/>
</dbReference>
<dbReference type="NCBIfam" id="TIGR03840">
    <property type="entry name" value="TMPT_Se_Te"/>
    <property type="match status" value="1"/>
</dbReference>
<dbReference type="PANTHER" id="PTHR10259">
    <property type="entry name" value="THIOPURINE S-METHYLTRANSFERASE"/>
    <property type="match status" value="1"/>
</dbReference>
<dbReference type="PANTHER" id="PTHR10259:SF11">
    <property type="entry name" value="THIOPURINE S-METHYLTRANSFERASE"/>
    <property type="match status" value="1"/>
</dbReference>
<dbReference type="Pfam" id="PF05724">
    <property type="entry name" value="TPMT"/>
    <property type="match status" value="1"/>
</dbReference>
<dbReference type="PIRSF" id="PIRSF023956">
    <property type="entry name" value="Thiopurine_S-methyltransferase"/>
    <property type="match status" value="1"/>
</dbReference>
<dbReference type="SUPFAM" id="SSF53335">
    <property type="entry name" value="S-adenosyl-L-methionine-dependent methyltransferases"/>
    <property type="match status" value="1"/>
</dbReference>
<dbReference type="PROSITE" id="PS51585">
    <property type="entry name" value="SAM_MT_TPMT"/>
    <property type="match status" value="1"/>
</dbReference>
<reference key="1">
    <citation type="submission" date="2006-08" db="EMBL/GenBank/DDBJ databases">
        <title>Complete sequence of chromosome 1 of Shewanella sp. MR-7.</title>
        <authorList>
            <person name="Copeland A."/>
            <person name="Lucas S."/>
            <person name="Lapidus A."/>
            <person name="Barry K."/>
            <person name="Detter J.C."/>
            <person name="Glavina del Rio T."/>
            <person name="Hammon N."/>
            <person name="Israni S."/>
            <person name="Dalin E."/>
            <person name="Tice H."/>
            <person name="Pitluck S."/>
            <person name="Kiss H."/>
            <person name="Brettin T."/>
            <person name="Bruce D."/>
            <person name="Han C."/>
            <person name="Tapia R."/>
            <person name="Gilna P."/>
            <person name="Schmutz J."/>
            <person name="Larimer F."/>
            <person name="Land M."/>
            <person name="Hauser L."/>
            <person name="Kyrpides N."/>
            <person name="Mikhailova N."/>
            <person name="Nealson K."/>
            <person name="Konstantinidis K."/>
            <person name="Klappenbach J."/>
            <person name="Tiedje J."/>
            <person name="Richardson P."/>
        </authorList>
    </citation>
    <scope>NUCLEOTIDE SEQUENCE [LARGE SCALE GENOMIC DNA]</scope>
    <source>
        <strain>MR-7</strain>
    </source>
</reference>
<comment type="catalytic activity">
    <reaction evidence="1">
        <text>S-adenosyl-L-methionine + a thiopurine = S-adenosyl-L-homocysteine + a thiopurine S-methylether.</text>
        <dbReference type="EC" id="2.1.1.67"/>
    </reaction>
</comment>
<comment type="subcellular location">
    <subcellularLocation>
        <location evidence="1">Cytoplasm</location>
    </subcellularLocation>
</comment>
<comment type="similarity">
    <text evidence="1">Belongs to the class I-like SAM-binding methyltransferase superfamily. TPMT family.</text>
</comment>